<evidence type="ECO:0000255" key="1">
    <source>
        <dbReference type="HAMAP-Rule" id="MF_00683"/>
    </source>
</evidence>
<name>TMAR_SERP5</name>
<organism>
    <name type="scientific">Serratia proteamaculans (strain 568)</name>
    <dbReference type="NCBI Taxonomy" id="399741"/>
    <lineage>
        <taxon>Bacteria</taxon>
        <taxon>Pseudomonadati</taxon>
        <taxon>Pseudomonadota</taxon>
        <taxon>Gammaproteobacteria</taxon>
        <taxon>Enterobacterales</taxon>
        <taxon>Yersiniaceae</taxon>
        <taxon>Serratia</taxon>
    </lineage>
</organism>
<comment type="function">
    <text evidence="1">Pole-localizer protein involved in the regulation of several cellular processes.</text>
</comment>
<comment type="subcellular location">
    <subcellularLocation>
        <location evidence="1">Cytoplasm</location>
    </subcellularLocation>
</comment>
<comment type="similarity">
    <text evidence="1">Belongs to the pole-localizer TmaR family.</text>
</comment>
<sequence>MENANKPSFQDVLEFVRMFRRKNKLQREIIDNEKKVRDNQKRVLLLDNLSEYIKPGMSIEDVQGIIANMRSDYEDRVDDYIIKNADLSKERRELSKKLKAMGEVK</sequence>
<proteinExistence type="inferred from homology"/>
<gene>
    <name evidence="1" type="primary">tmaR</name>
    <name type="ordered locus">Spro_3208</name>
</gene>
<reference key="1">
    <citation type="submission" date="2007-09" db="EMBL/GenBank/DDBJ databases">
        <title>Complete sequence of chromosome of Serratia proteamaculans 568.</title>
        <authorList>
            <consortium name="US DOE Joint Genome Institute"/>
            <person name="Copeland A."/>
            <person name="Lucas S."/>
            <person name="Lapidus A."/>
            <person name="Barry K."/>
            <person name="Glavina del Rio T."/>
            <person name="Dalin E."/>
            <person name="Tice H."/>
            <person name="Pitluck S."/>
            <person name="Chain P."/>
            <person name="Malfatti S."/>
            <person name="Shin M."/>
            <person name="Vergez L."/>
            <person name="Schmutz J."/>
            <person name="Larimer F."/>
            <person name="Land M."/>
            <person name="Hauser L."/>
            <person name="Kyrpides N."/>
            <person name="Kim E."/>
            <person name="Taghavi S."/>
            <person name="Newman L."/>
            <person name="Vangronsveld J."/>
            <person name="van der Lelie D."/>
            <person name="Richardson P."/>
        </authorList>
    </citation>
    <scope>NUCLEOTIDE SEQUENCE [LARGE SCALE GENOMIC DNA]</scope>
    <source>
        <strain>568</strain>
    </source>
</reference>
<protein>
    <recommendedName>
        <fullName evidence="1">Pole-localizer protein TmaR</fullName>
    </recommendedName>
</protein>
<feature type="chain" id="PRO_1000061980" description="Pole-localizer protein TmaR">
    <location>
        <begin position="1"/>
        <end position="105"/>
    </location>
</feature>
<feature type="coiled-coil region" evidence="1">
    <location>
        <begin position="22"/>
        <end position="42"/>
    </location>
</feature>
<feature type="coiled-coil region" evidence="1">
    <location>
        <begin position="70"/>
        <end position="104"/>
    </location>
</feature>
<accession>A8GGR6</accession>
<keyword id="KW-0175">Coiled coil</keyword>
<keyword id="KW-0963">Cytoplasm</keyword>
<dbReference type="EMBL" id="CP000826">
    <property type="protein sequence ID" value="ABV42306.1"/>
    <property type="molecule type" value="Genomic_DNA"/>
</dbReference>
<dbReference type="SMR" id="A8GGR6"/>
<dbReference type="STRING" id="399741.Spro_3208"/>
<dbReference type="KEGG" id="spe:Spro_3208"/>
<dbReference type="eggNOG" id="COG2926">
    <property type="taxonomic scope" value="Bacteria"/>
</dbReference>
<dbReference type="HOGENOM" id="CLU_153146_0_0_6"/>
<dbReference type="OrthoDB" id="90485at2"/>
<dbReference type="GO" id="GO:0005829">
    <property type="term" value="C:cytosol"/>
    <property type="evidence" value="ECO:0007669"/>
    <property type="project" value="TreeGrafter"/>
</dbReference>
<dbReference type="HAMAP" id="MF_00683">
    <property type="entry name" value="Pole_loc_TmaR"/>
    <property type="match status" value="1"/>
</dbReference>
<dbReference type="InterPro" id="IPR007458">
    <property type="entry name" value="DUF496"/>
</dbReference>
<dbReference type="InterPro" id="IPR053375">
    <property type="entry name" value="UPF0265"/>
</dbReference>
<dbReference type="NCBIfam" id="NF003844">
    <property type="entry name" value="PRK05423.1"/>
    <property type="match status" value="1"/>
</dbReference>
<dbReference type="NCBIfam" id="NF040881">
    <property type="entry name" value="PTS_reg_TmaR"/>
    <property type="match status" value="1"/>
</dbReference>
<dbReference type="PANTHER" id="PTHR39591">
    <property type="entry name" value="UPF0265 PROTEIN YEEX"/>
    <property type="match status" value="1"/>
</dbReference>
<dbReference type="PANTHER" id="PTHR39591:SF1">
    <property type="entry name" value="UPF0265 PROTEIN YEEX"/>
    <property type="match status" value="1"/>
</dbReference>
<dbReference type="Pfam" id="PF04363">
    <property type="entry name" value="DUF496"/>
    <property type="match status" value="1"/>
</dbReference>
<dbReference type="PIRSF" id="PIRSF028773">
    <property type="entry name" value="UCP028773"/>
    <property type="match status" value="1"/>
</dbReference>